<proteinExistence type="inferred from homology"/>
<comment type="similarity">
    <text evidence="1">Belongs to the PPR family. PCMP-E subfamily.</text>
</comment>
<comment type="online information" name="Pentatricopeptide repeat proteins">
    <link uri="https://ppr.plantenergy.uwa.edu.au"/>
</comment>
<dbReference type="EMBL" id="AF069441">
    <property type="protein sequence ID" value="AAD36944.1"/>
    <property type="molecule type" value="Genomic_DNA"/>
</dbReference>
<dbReference type="EMBL" id="AL161500">
    <property type="protein sequence ID" value="CAB77905.1"/>
    <property type="molecule type" value="Genomic_DNA"/>
</dbReference>
<dbReference type="EMBL" id="CP002687">
    <property type="protein sequence ID" value="AEE82385.1"/>
    <property type="molecule type" value="Genomic_DNA"/>
</dbReference>
<dbReference type="PIR" id="C85055">
    <property type="entry name" value="C85055"/>
</dbReference>
<dbReference type="RefSeq" id="NP_192346.1">
    <property type="nucleotide sequence ID" value="NM_116675.2"/>
</dbReference>
<dbReference type="SMR" id="Q9XE98"/>
<dbReference type="FunCoup" id="Q9XE98">
    <property type="interactions" value="226"/>
</dbReference>
<dbReference type="PaxDb" id="3702-AT4G04370.1"/>
<dbReference type="EnsemblPlants" id="AT4G04370.1">
    <property type="protein sequence ID" value="AT4G04370.1"/>
    <property type="gene ID" value="AT4G04370"/>
</dbReference>
<dbReference type="GeneID" id="825757"/>
<dbReference type="Gramene" id="AT4G04370.1">
    <property type="protein sequence ID" value="AT4G04370.1"/>
    <property type="gene ID" value="AT4G04370"/>
</dbReference>
<dbReference type="KEGG" id="ath:AT4G04370"/>
<dbReference type="Araport" id="AT4G04370"/>
<dbReference type="TAIR" id="AT4G04370"/>
<dbReference type="eggNOG" id="KOG4197">
    <property type="taxonomic scope" value="Eukaryota"/>
</dbReference>
<dbReference type="HOGENOM" id="CLU_002706_15_6_1"/>
<dbReference type="InParanoid" id="Q9XE98"/>
<dbReference type="OMA" id="WSFIELH"/>
<dbReference type="PhylomeDB" id="Q9XE98"/>
<dbReference type="PRO" id="PR:Q9XE98"/>
<dbReference type="Proteomes" id="UP000006548">
    <property type="component" value="Chromosome 4"/>
</dbReference>
<dbReference type="ExpressionAtlas" id="Q9XE98">
    <property type="expression patterns" value="baseline and differential"/>
</dbReference>
<dbReference type="GO" id="GO:0003723">
    <property type="term" value="F:RNA binding"/>
    <property type="evidence" value="ECO:0007669"/>
    <property type="project" value="InterPro"/>
</dbReference>
<dbReference type="GO" id="GO:0009451">
    <property type="term" value="P:RNA modification"/>
    <property type="evidence" value="ECO:0007669"/>
    <property type="project" value="InterPro"/>
</dbReference>
<dbReference type="FunFam" id="1.25.40.10:FF:000351">
    <property type="entry name" value="Pentatricopeptide repeat-containing protein"/>
    <property type="match status" value="1"/>
</dbReference>
<dbReference type="FunFam" id="1.25.40.10:FF:000682">
    <property type="entry name" value="Pentatricopeptide repeat-containing protein At3g16610"/>
    <property type="match status" value="1"/>
</dbReference>
<dbReference type="FunFam" id="1.25.40.10:FF:000196">
    <property type="entry name" value="Pentatricopeptide repeat-containing protein At4g14850"/>
    <property type="match status" value="1"/>
</dbReference>
<dbReference type="FunFam" id="1.25.40.10:FF:000436">
    <property type="entry name" value="Pentatricopeptide repeat-containing protein At5g39350 family"/>
    <property type="match status" value="1"/>
</dbReference>
<dbReference type="FunFam" id="1.25.40.10:FF:000090">
    <property type="entry name" value="Pentatricopeptide repeat-containing protein, chloroplastic"/>
    <property type="match status" value="1"/>
</dbReference>
<dbReference type="Gene3D" id="1.25.40.10">
    <property type="entry name" value="Tetratricopeptide repeat domain"/>
    <property type="match status" value="6"/>
</dbReference>
<dbReference type="InterPro" id="IPR046848">
    <property type="entry name" value="E_motif"/>
</dbReference>
<dbReference type="InterPro" id="IPR002885">
    <property type="entry name" value="Pentatricopeptide_rpt"/>
</dbReference>
<dbReference type="InterPro" id="IPR046960">
    <property type="entry name" value="PPR_At4g14850-like_plant"/>
</dbReference>
<dbReference type="InterPro" id="IPR011990">
    <property type="entry name" value="TPR-like_helical_dom_sf"/>
</dbReference>
<dbReference type="NCBIfam" id="TIGR00756">
    <property type="entry name" value="PPR"/>
    <property type="match status" value="6"/>
</dbReference>
<dbReference type="PANTHER" id="PTHR24015:SF1903">
    <property type="entry name" value="OS05G0305300 PROTEIN"/>
    <property type="match status" value="1"/>
</dbReference>
<dbReference type="PANTHER" id="PTHR24015">
    <property type="entry name" value="OS07G0578800 PROTEIN-RELATED"/>
    <property type="match status" value="1"/>
</dbReference>
<dbReference type="Pfam" id="PF20431">
    <property type="entry name" value="E_motif"/>
    <property type="match status" value="1"/>
</dbReference>
<dbReference type="Pfam" id="PF01535">
    <property type="entry name" value="PPR"/>
    <property type="match status" value="4"/>
</dbReference>
<dbReference type="Pfam" id="PF13041">
    <property type="entry name" value="PPR_2"/>
    <property type="match status" value="3"/>
</dbReference>
<dbReference type="PROSITE" id="PS51375">
    <property type="entry name" value="PPR"/>
    <property type="match status" value="17"/>
</dbReference>
<gene>
    <name type="primary">PCMP-E99</name>
    <name type="ordered locus">At4g04370</name>
    <name type="ORF">T19B17.9</name>
</gene>
<organism>
    <name type="scientific">Arabidopsis thaliana</name>
    <name type="common">Mouse-ear cress</name>
    <dbReference type="NCBI Taxonomy" id="3702"/>
    <lineage>
        <taxon>Eukaryota</taxon>
        <taxon>Viridiplantae</taxon>
        <taxon>Streptophyta</taxon>
        <taxon>Embryophyta</taxon>
        <taxon>Tracheophyta</taxon>
        <taxon>Spermatophyta</taxon>
        <taxon>Magnoliopsida</taxon>
        <taxon>eudicotyledons</taxon>
        <taxon>Gunneridae</taxon>
        <taxon>Pentapetalae</taxon>
        <taxon>rosids</taxon>
        <taxon>malvids</taxon>
        <taxon>Brassicales</taxon>
        <taxon>Brassicaceae</taxon>
        <taxon>Camelineae</taxon>
        <taxon>Arabidopsis</taxon>
    </lineage>
</organism>
<accession>Q9XE98</accession>
<evidence type="ECO:0000305" key="1"/>
<sequence length="729" mass="81212">MIRTSSVLNSTKYFNSHINHLSSHGDHKQVLSTFSSMLANKLLPDTFTFPSLLKACASLQRLSFGLSIHQQVLVNGFSSDFYISSSLVNLYAKFGLLAHARKVFEEMRERDVVHWTAMIGCYSRAGIVGEACSLVNEMRFQGIKPGPVTLLEMLSGVLEITQLQCLHDFAVIYGFDCDIAVMNSMLNLYCKCDHVGDAKDLFDQMEQRDMVSWNTMISGYASVGNMSEILKLLYRMRGDGLRPDQQTFGASLSVSGTMCDLEMGRMLHCQIVKTGFDVDMHLKTALITMYLKCGKEEASYRVLETIPNKDVVCWTVMISGLMRLGRAEKALIVFSEMLQSGSDLSSEAIASVVASCAQLGSFDLGASVHGYVLRHGYTLDTPALNSLITMYAKCGHLDKSLVIFERMNERDLVSWNAIISGYAQNVDLCKALLLFEEMKFKTVQQVDSFTVVSLLQACSSAGALPVGKLIHCIVIRSFIRPCSLVDTALVDMYSKCGYLEAAQRCFDSISWKDVVSWGILIAGYGFHGKGDIALEIYSEFLHSGMEPNHVIFLAVLSSCSHNGMVQQGLKIFSSMVRDFGVEPNHEHLACVVDLLCRAKRIEDAFKFYKENFTRPSIDVLGIILDACRANGKTEVEDIICEDMIELKPGDAGHYVKLGHSFAAMKRWDDVSESWNQMRSLGLKKLPGWSKIEMNGKTTTFFMNHTSHSDDTVSLLKLLSREMMQFGSNN</sequence>
<feature type="chain" id="PRO_0000363421" description="Pentatricopeptide repeat-containing protein At4g04370">
    <location>
        <begin position="1"/>
        <end position="729"/>
    </location>
</feature>
<feature type="repeat" description="PPR 1">
    <location>
        <begin position="10"/>
        <end position="44"/>
    </location>
</feature>
<feature type="repeat" description="PPR 2">
    <location>
        <begin position="45"/>
        <end position="79"/>
    </location>
</feature>
<feature type="repeat" description="PPR 3">
    <location>
        <begin position="80"/>
        <end position="110"/>
    </location>
</feature>
<feature type="repeat" description="PPR 4">
    <location>
        <begin position="111"/>
        <end position="145"/>
    </location>
</feature>
<feature type="repeat" description="PPR 5">
    <location>
        <begin position="178"/>
        <end position="208"/>
    </location>
</feature>
<feature type="repeat" description="PPR 6">
    <location>
        <begin position="209"/>
        <end position="243"/>
    </location>
</feature>
<feature type="repeat" description="PPR 7">
    <location>
        <begin position="244"/>
        <end position="278"/>
    </location>
</feature>
<feature type="repeat" description="PPR 8">
    <location>
        <begin position="279"/>
        <end position="309"/>
    </location>
</feature>
<feature type="repeat" description="PPR 9">
    <location>
        <begin position="310"/>
        <end position="344"/>
    </location>
</feature>
<feature type="repeat" description="PPR 10">
    <location>
        <begin position="345"/>
        <end position="379"/>
    </location>
</feature>
<feature type="repeat" description="PPR 11">
    <location>
        <begin position="380"/>
        <end position="414"/>
    </location>
</feature>
<feature type="repeat" description="PPR 12">
    <location>
        <begin position="415"/>
        <end position="445"/>
    </location>
</feature>
<feature type="repeat" description="PPR 13">
    <location>
        <begin position="447"/>
        <end position="481"/>
    </location>
</feature>
<feature type="repeat" description="PPR 14">
    <location>
        <begin position="482"/>
        <end position="512"/>
    </location>
</feature>
<feature type="repeat" description="PPR 15">
    <location>
        <begin position="513"/>
        <end position="547"/>
    </location>
</feature>
<feature type="repeat" description="PPR 16">
    <location>
        <begin position="548"/>
        <end position="583"/>
    </location>
</feature>
<feature type="repeat" description="PPR 17">
    <location>
        <begin position="584"/>
        <end position="618"/>
    </location>
</feature>
<feature type="region of interest" description="Type E motif">
    <location>
        <begin position="619"/>
        <end position="694"/>
    </location>
</feature>
<feature type="region of interest" description="Type E(+) motif">
    <location>
        <begin position="695"/>
        <end position="723"/>
    </location>
</feature>
<name>PP303_ARATH</name>
<reference key="1">
    <citation type="journal article" date="1999" name="Nature">
        <title>Sequence and analysis of chromosome 4 of the plant Arabidopsis thaliana.</title>
        <authorList>
            <person name="Mayer K.F.X."/>
            <person name="Schueller C."/>
            <person name="Wambutt R."/>
            <person name="Murphy G."/>
            <person name="Volckaert G."/>
            <person name="Pohl T."/>
            <person name="Duesterhoeft A."/>
            <person name="Stiekema W."/>
            <person name="Entian K.-D."/>
            <person name="Terryn N."/>
            <person name="Harris B."/>
            <person name="Ansorge W."/>
            <person name="Brandt P."/>
            <person name="Grivell L.A."/>
            <person name="Rieger M."/>
            <person name="Weichselgartner M."/>
            <person name="de Simone V."/>
            <person name="Obermaier B."/>
            <person name="Mache R."/>
            <person name="Mueller M."/>
            <person name="Kreis M."/>
            <person name="Delseny M."/>
            <person name="Puigdomenech P."/>
            <person name="Watson M."/>
            <person name="Schmidtheini T."/>
            <person name="Reichert B."/>
            <person name="Portetelle D."/>
            <person name="Perez-Alonso M."/>
            <person name="Boutry M."/>
            <person name="Bancroft I."/>
            <person name="Vos P."/>
            <person name="Hoheisel J."/>
            <person name="Zimmermann W."/>
            <person name="Wedler H."/>
            <person name="Ridley P."/>
            <person name="Langham S.-A."/>
            <person name="McCullagh B."/>
            <person name="Bilham L."/>
            <person name="Robben J."/>
            <person name="van der Schueren J."/>
            <person name="Grymonprez B."/>
            <person name="Chuang Y.-J."/>
            <person name="Vandenbussche F."/>
            <person name="Braeken M."/>
            <person name="Weltjens I."/>
            <person name="Voet M."/>
            <person name="Bastiaens I."/>
            <person name="Aert R."/>
            <person name="Defoor E."/>
            <person name="Weitzenegger T."/>
            <person name="Bothe G."/>
            <person name="Ramsperger U."/>
            <person name="Hilbert H."/>
            <person name="Braun M."/>
            <person name="Holzer E."/>
            <person name="Brandt A."/>
            <person name="Peters S."/>
            <person name="van Staveren M."/>
            <person name="Dirkse W."/>
            <person name="Mooijman P."/>
            <person name="Klein Lankhorst R."/>
            <person name="Rose M."/>
            <person name="Hauf J."/>
            <person name="Koetter P."/>
            <person name="Berneiser S."/>
            <person name="Hempel S."/>
            <person name="Feldpausch M."/>
            <person name="Lamberth S."/>
            <person name="Van den Daele H."/>
            <person name="De Keyser A."/>
            <person name="Buysshaert C."/>
            <person name="Gielen J."/>
            <person name="Villarroel R."/>
            <person name="De Clercq R."/>
            <person name="van Montagu M."/>
            <person name="Rogers J."/>
            <person name="Cronin A."/>
            <person name="Quail M.A."/>
            <person name="Bray-Allen S."/>
            <person name="Clark L."/>
            <person name="Doggett J."/>
            <person name="Hall S."/>
            <person name="Kay M."/>
            <person name="Lennard N."/>
            <person name="McLay K."/>
            <person name="Mayes R."/>
            <person name="Pettett A."/>
            <person name="Rajandream M.A."/>
            <person name="Lyne M."/>
            <person name="Benes V."/>
            <person name="Rechmann S."/>
            <person name="Borkova D."/>
            <person name="Bloecker H."/>
            <person name="Scharfe M."/>
            <person name="Grimm M."/>
            <person name="Loehnert T.-H."/>
            <person name="Dose S."/>
            <person name="de Haan M."/>
            <person name="Maarse A.C."/>
            <person name="Schaefer M."/>
            <person name="Mueller-Auer S."/>
            <person name="Gabel C."/>
            <person name="Fuchs M."/>
            <person name="Fartmann B."/>
            <person name="Granderath K."/>
            <person name="Dauner D."/>
            <person name="Herzl A."/>
            <person name="Neumann S."/>
            <person name="Argiriou A."/>
            <person name="Vitale D."/>
            <person name="Liguori R."/>
            <person name="Piravandi E."/>
            <person name="Massenet O."/>
            <person name="Quigley F."/>
            <person name="Clabauld G."/>
            <person name="Muendlein A."/>
            <person name="Felber R."/>
            <person name="Schnabl S."/>
            <person name="Hiller R."/>
            <person name="Schmidt W."/>
            <person name="Lecharny A."/>
            <person name="Aubourg S."/>
            <person name="Chefdor F."/>
            <person name="Cooke R."/>
            <person name="Berger C."/>
            <person name="Monfort A."/>
            <person name="Casacuberta E."/>
            <person name="Gibbons T."/>
            <person name="Weber N."/>
            <person name="Vandenbol M."/>
            <person name="Bargues M."/>
            <person name="Terol J."/>
            <person name="Torres A."/>
            <person name="Perez-Perez A."/>
            <person name="Purnelle B."/>
            <person name="Bent E."/>
            <person name="Johnson S."/>
            <person name="Tacon D."/>
            <person name="Jesse T."/>
            <person name="Heijnen L."/>
            <person name="Schwarz S."/>
            <person name="Scholler P."/>
            <person name="Heber S."/>
            <person name="Francs P."/>
            <person name="Bielke C."/>
            <person name="Frishman D."/>
            <person name="Haase D."/>
            <person name="Lemcke K."/>
            <person name="Mewes H.-W."/>
            <person name="Stocker S."/>
            <person name="Zaccaria P."/>
            <person name="Bevan M."/>
            <person name="Wilson R.K."/>
            <person name="de la Bastide M."/>
            <person name="Habermann K."/>
            <person name="Parnell L."/>
            <person name="Dedhia N."/>
            <person name="Gnoj L."/>
            <person name="Schutz K."/>
            <person name="Huang E."/>
            <person name="Spiegel L."/>
            <person name="Sekhon M."/>
            <person name="Murray J."/>
            <person name="Sheet P."/>
            <person name="Cordes M."/>
            <person name="Abu-Threideh J."/>
            <person name="Stoneking T."/>
            <person name="Kalicki J."/>
            <person name="Graves T."/>
            <person name="Harmon G."/>
            <person name="Edwards J."/>
            <person name="Latreille P."/>
            <person name="Courtney L."/>
            <person name="Cloud J."/>
            <person name="Abbott A."/>
            <person name="Scott K."/>
            <person name="Johnson D."/>
            <person name="Minx P."/>
            <person name="Bentley D."/>
            <person name="Fulton B."/>
            <person name="Miller N."/>
            <person name="Greco T."/>
            <person name="Kemp K."/>
            <person name="Kramer J."/>
            <person name="Fulton L."/>
            <person name="Mardis E."/>
            <person name="Dante M."/>
            <person name="Pepin K."/>
            <person name="Hillier L.W."/>
            <person name="Nelson J."/>
            <person name="Spieth J."/>
            <person name="Ryan E."/>
            <person name="Andrews S."/>
            <person name="Geisel C."/>
            <person name="Layman D."/>
            <person name="Du H."/>
            <person name="Ali J."/>
            <person name="Berghoff A."/>
            <person name="Jones K."/>
            <person name="Drone K."/>
            <person name="Cotton M."/>
            <person name="Joshu C."/>
            <person name="Antonoiu B."/>
            <person name="Zidanic M."/>
            <person name="Strong C."/>
            <person name="Sun H."/>
            <person name="Lamar B."/>
            <person name="Yordan C."/>
            <person name="Ma P."/>
            <person name="Zhong J."/>
            <person name="Preston R."/>
            <person name="Vil D."/>
            <person name="Shekher M."/>
            <person name="Matero A."/>
            <person name="Shah R."/>
            <person name="Swaby I.K."/>
            <person name="O'Shaughnessy A."/>
            <person name="Rodriguez M."/>
            <person name="Hoffman J."/>
            <person name="Till S."/>
            <person name="Granat S."/>
            <person name="Shohdy N."/>
            <person name="Hasegawa A."/>
            <person name="Hameed A."/>
            <person name="Lodhi M."/>
            <person name="Johnson A."/>
            <person name="Chen E."/>
            <person name="Marra M.A."/>
            <person name="Martienssen R."/>
            <person name="McCombie W.R."/>
        </authorList>
    </citation>
    <scope>NUCLEOTIDE SEQUENCE [LARGE SCALE GENOMIC DNA]</scope>
    <source>
        <strain>cv. Columbia</strain>
    </source>
</reference>
<reference key="2">
    <citation type="journal article" date="2017" name="Plant J.">
        <title>Araport11: a complete reannotation of the Arabidopsis thaliana reference genome.</title>
        <authorList>
            <person name="Cheng C.Y."/>
            <person name="Krishnakumar V."/>
            <person name="Chan A.P."/>
            <person name="Thibaud-Nissen F."/>
            <person name="Schobel S."/>
            <person name="Town C.D."/>
        </authorList>
    </citation>
    <scope>GENOME REANNOTATION</scope>
    <source>
        <strain>cv. Columbia</strain>
    </source>
</reference>
<reference key="3">
    <citation type="journal article" date="2004" name="Plant Cell">
        <title>Genome-wide analysis of Arabidopsis pentatricopeptide repeat proteins reveals their essential role in organelle biogenesis.</title>
        <authorList>
            <person name="Lurin C."/>
            <person name="Andres C."/>
            <person name="Aubourg S."/>
            <person name="Bellaoui M."/>
            <person name="Bitton F."/>
            <person name="Bruyere C."/>
            <person name="Caboche M."/>
            <person name="Debast C."/>
            <person name="Gualberto J."/>
            <person name="Hoffmann B."/>
            <person name="Lecharny A."/>
            <person name="Le Ret M."/>
            <person name="Martin-Magniette M.-L."/>
            <person name="Mireau H."/>
            <person name="Peeters N."/>
            <person name="Renou J.-P."/>
            <person name="Szurek B."/>
            <person name="Taconnat L."/>
            <person name="Small I."/>
        </authorList>
    </citation>
    <scope>GENE FAMILY</scope>
</reference>
<keyword id="KW-1185">Reference proteome</keyword>
<keyword id="KW-0677">Repeat</keyword>
<protein>
    <recommendedName>
        <fullName>Pentatricopeptide repeat-containing protein At4g04370</fullName>
    </recommendedName>
</protein>